<dbReference type="EC" id="1.97.1.12" evidence="1"/>
<dbReference type="EMBL" id="X58825">
    <property type="protein sequence ID" value="CAA41629.1"/>
    <property type="molecule type" value="Genomic_DNA"/>
</dbReference>
<dbReference type="EMBL" id="BA000022">
    <property type="protein sequence ID" value="BAA17437.1"/>
    <property type="molecule type" value="Genomic_DNA"/>
</dbReference>
<dbReference type="PIR" id="S18242">
    <property type="entry name" value="S18242"/>
</dbReference>
<dbReference type="PDB" id="4KT0">
    <property type="method" value="X-ray"/>
    <property type="resolution" value="2.80 A"/>
    <property type="chains" value="A=1-751"/>
</dbReference>
<dbReference type="PDB" id="4L6V">
    <property type="method" value="X-ray"/>
    <property type="resolution" value="3.80 A"/>
    <property type="chains" value="1/A/a=1-751"/>
</dbReference>
<dbReference type="PDB" id="6HQB">
    <property type="method" value="X-ray"/>
    <property type="resolution" value="4.00 A"/>
    <property type="chains" value="A=1-751"/>
</dbReference>
<dbReference type="PDB" id="6NWA">
    <property type="method" value="EM"/>
    <property type="resolution" value="3.48 A"/>
    <property type="chains" value="A/H/a=1-751"/>
</dbReference>
<dbReference type="PDB" id="6UZV">
    <property type="method" value="EM"/>
    <property type="resolution" value="3.10 A"/>
    <property type="chains" value="1/A/a=1-751"/>
</dbReference>
<dbReference type="PDB" id="7O1V">
    <property type="method" value="EM"/>
    <property type="resolution" value="4.31 A"/>
    <property type="chains" value="A=13-751"/>
</dbReference>
<dbReference type="PDB" id="7UMH">
    <property type="method" value="EM"/>
    <property type="resolution" value="2.60 A"/>
    <property type="chains" value="A/H/a=1-751"/>
</dbReference>
<dbReference type="PDB" id="8AM5">
    <property type="method" value="EM"/>
    <property type="resolution" value="3.10 A"/>
    <property type="chains" value="a=1-751"/>
</dbReference>
<dbReference type="PDB" id="8ASL">
    <property type="method" value="EM"/>
    <property type="resolution" value="3.15 A"/>
    <property type="chains" value="a=1-751"/>
</dbReference>
<dbReference type="PDB" id="8ASP">
    <property type="method" value="EM"/>
    <property type="resolution" value="2.90 A"/>
    <property type="chains" value="a=1-751"/>
</dbReference>
<dbReference type="PDB" id="9AU4">
    <property type="method" value="EM"/>
    <property type="resolution" value="2.03 A"/>
    <property type="chains" value="A/G/a=1-751"/>
</dbReference>
<dbReference type="PDBsum" id="4KT0"/>
<dbReference type="PDBsum" id="4L6V"/>
<dbReference type="PDBsum" id="6HQB"/>
<dbReference type="PDBsum" id="6NWA"/>
<dbReference type="PDBsum" id="6UZV"/>
<dbReference type="PDBsum" id="7O1V"/>
<dbReference type="PDBsum" id="7UMH"/>
<dbReference type="PDBsum" id="8AM5"/>
<dbReference type="PDBsum" id="8ASL"/>
<dbReference type="PDBsum" id="8ASP"/>
<dbReference type="PDBsum" id="9AU4"/>
<dbReference type="EMDB" id="EMD-0524"/>
<dbReference type="EMDB" id="EMD-12697"/>
<dbReference type="EMDB" id="EMD-15522"/>
<dbReference type="EMDB" id="EMD-15618"/>
<dbReference type="EMDB" id="EMD-15621"/>
<dbReference type="EMDB" id="EMD-20963"/>
<dbReference type="EMDB" id="EMD-26601"/>
<dbReference type="EMDB" id="EMD-43843"/>
<dbReference type="SMR" id="P29254"/>
<dbReference type="IntAct" id="P29254">
    <property type="interactions" value="8"/>
</dbReference>
<dbReference type="STRING" id="1148.gene:10498301"/>
<dbReference type="PaxDb" id="1148-1652516"/>
<dbReference type="EnsemblBacteria" id="BAA17437">
    <property type="protein sequence ID" value="BAA17437"/>
    <property type="gene ID" value="BAA17437"/>
</dbReference>
<dbReference type="KEGG" id="syn:slr1834"/>
<dbReference type="eggNOG" id="COG2885">
    <property type="taxonomic scope" value="Bacteria"/>
</dbReference>
<dbReference type="InParanoid" id="P29254"/>
<dbReference type="PhylomeDB" id="P29254"/>
<dbReference type="BioCyc" id="MetaCyc:PSAA-MONOMER"/>
<dbReference type="BRENDA" id="1.97.1.12">
    <property type="organism ID" value="6192"/>
</dbReference>
<dbReference type="EvolutionaryTrace" id="P29254"/>
<dbReference type="Proteomes" id="UP000001425">
    <property type="component" value="Chromosome"/>
</dbReference>
<dbReference type="GO" id="GO:0009522">
    <property type="term" value="C:photosystem I"/>
    <property type="evidence" value="ECO:0000314"/>
    <property type="project" value="UniProtKB"/>
</dbReference>
<dbReference type="GO" id="GO:0005886">
    <property type="term" value="C:plasma membrane"/>
    <property type="evidence" value="ECO:0000314"/>
    <property type="project" value="UniProtKB"/>
</dbReference>
<dbReference type="GO" id="GO:0031676">
    <property type="term" value="C:plasma membrane-derived thylakoid membrane"/>
    <property type="evidence" value="ECO:0007669"/>
    <property type="project" value="UniProtKB-SubCell"/>
</dbReference>
<dbReference type="GO" id="GO:0051539">
    <property type="term" value="F:4 iron, 4 sulfur cluster binding"/>
    <property type="evidence" value="ECO:0007669"/>
    <property type="project" value="UniProtKB-KW"/>
</dbReference>
<dbReference type="GO" id="GO:0016168">
    <property type="term" value="F:chlorophyll binding"/>
    <property type="evidence" value="ECO:0007669"/>
    <property type="project" value="UniProtKB-KW"/>
</dbReference>
<dbReference type="GO" id="GO:0009055">
    <property type="term" value="F:electron transfer activity"/>
    <property type="evidence" value="ECO:0007669"/>
    <property type="project" value="UniProtKB-UniRule"/>
</dbReference>
<dbReference type="GO" id="GO:0000287">
    <property type="term" value="F:magnesium ion binding"/>
    <property type="evidence" value="ECO:0007669"/>
    <property type="project" value="UniProtKB-UniRule"/>
</dbReference>
<dbReference type="GO" id="GO:0016491">
    <property type="term" value="F:oxidoreductase activity"/>
    <property type="evidence" value="ECO:0007669"/>
    <property type="project" value="UniProtKB-KW"/>
</dbReference>
<dbReference type="GO" id="GO:0015979">
    <property type="term" value="P:photosynthesis"/>
    <property type="evidence" value="ECO:0007669"/>
    <property type="project" value="UniProtKB-UniRule"/>
</dbReference>
<dbReference type="FunFam" id="1.20.1130.10:FF:000001">
    <property type="entry name" value="Photosystem I P700 chlorophyll a apoprotein A2"/>
    <property type="match status" value="1"/>
</dbReference>
<dbReference type="Gene3D" id="1.20.1130.10">
    <property type="entry name" value="Photosystem I PsaA/PsaB"/>
    <property type="match status" value="1"/>
</dbReference>
<dbReference type="HAMAP" id="MF_00458">
    <property type="entry name" value="PSI_PsaA"/>
    <property type="match status" value="1"/>
</dbReference>
<dbReference type="InterPro" id="IPR006243">
    <property type="entry name" value="PSI_PsaA"/>
</dbReference>
<dbReference type="InterPro" id="IPR001280">
    <property type="entry name" value="PSI_PsaA/B"/>
</dbReference>
<dbReference type="InterPro" id="IPR020586">
    <property type="entry name" value="PSI_PsaA/B_CS"/>
</dbReference>
<dbReference type="InterPro" id="IPR036408">
    <property type="entry name" value="PSI_PsaA/B_sf"/>
</dbReference>
<dbReference type="NCBIfam" id="TIGR01335">
    <property type="entry name" value="psaA"/>
    <property type="match status" value="1"/>
</dbReference>
<dbReference type="PANTHER" id="PTHR30128">
    <property type="entry name" value="OUTER MEMBRANE PROTEIN, OMPA-RELATED"/>
    <property type="match status" value="1"/>
</dbReference>
<dbReference type="PANTHER" id="PTHR30128:SF19">
    <property type="entry name" value="PHOTOSYSTEM I P700 CHLOROPHYLL A APOPROTEIN A1-RELATED"/>
    <property type="match status" value="1"/>
</dbReference>
<dbReference type="Pfam" id="PF00223">
    <property type="entry name" value="PsaA_PsaB"/>
    <property type="match status" value="1"/>
</dbReference>
<dbReference type="PIRSF" id="PIRSF002905">
    <property type="entry name" value="PSI_A"/>
    <property type="match status" value="1"/>
</dbReference>
<dbReference type="PRINTS" id="PR00257">
    <property type="entry name" value="PHOTSYSPSAAB"/>
</dbReference>
<dbReference type="SUPFAM" id="SSF81558">
    <property type="entry name" value="Photosystem I subunits PsaA/PsaB"/>
    <property type="match status" value="1"/>
</dbReference>
<dbReference type="PROSITE" id="PS00419">
    <property type="entry name" value="PHOTOSYSTEM_I_PSAAB"/>
    <property type="match status" value="1"/>
</dbReference>
<accession>P29254</accession>
<accession>P73397</accession>
<organism>
    <name type="scientific">Synechocystis sp. (strain ATCC 27184 / PCC 6803 / Kazusa)</name>
    <dbReference type="NCBI Taxonomy" id="1111708"/>
    <lineage>
        <taxon>Bacteria</taxon>
        <taxon>Bacillati</taxon>
        <taxon>Cyanobacteriota</taxon>
        <taxon>Cyanophyceae</taxon>
        <taxon>Synechococcales</taxon>
        <taxon>Merismopediaceae</taxon>
        <taxon>Synechocystis</taxon>
    </lineage>
</organism>
<evidence type="ECO:0000255" key="1">
    <source>
        <dbReference type="HAMAP-Rule" id="MF_00458"/>
    </source>
</evidence>
<evidence type="ECO:0000305" key="2"/>
<evidence type="ECO:0007829" key="3">
    <source>
        <dbReference type="PDB" id="4KT0"/>
    </source>
</evidence>
<evidence type="ECO:0007829" key="4">
    <source>
        <dbReference type="PDB" id="8AM5"/>
    </source>
</evidence>
<evidence type="ECO:0007829" key="5">
    <source>
        <dbReference type="PDB" id="8ASL"/>
    </source>
</evidence>
<evidence type="ECO:0007829" key="6">
    <source>
        <dbReference type="PDB" id="8ASP"/>
    </source>
</evidence>
<proteinExistence type="evidence at protein level"/>
<name>PSAA_SYNY3</name>
<comment type="function">
    <text>PsaA and PsaB bind P700, the primary electron donor of photosystem I (PSI), as well as the electron acceptors A0, A1 and FX. PSI is a plastocyanin/cytochrome c6-ferredoxin oxidoreductase, converting photonic excitation into a charge separation, which transfers an electron from the donor P700 chlorophyll pair to the spectroscopically characterized acceptors A0, A1, FX, FA and FB in turn. Oxidized P700 is reduced on the lumenal side of the thylakoid membrane by plastocyanin or cytochrome c6.</text>
</comment>
<comment type="catalytic activity">
    <reaction evidence="1">
        <text>reduced [plastocyanin] + hnu + oxidized [2Fe-2S]-[ferredoxin] = oxidized [plastocyanin] + reduced [2Fe-2S]-[ferredoxin]</text>
        <dbReference type="Rhea" id="RHEA:30407"/>
        <dbReference type="Rhea" id="RHEA-COMP:10000"/>
        <dbReference type="Rhea" id="RHEA-COMP:10001"/>
        <dbReference type="Rhea" id="RHEA-COMP:10039"/>
        <dbReference type="Rhea" id="RHEA-COMP:10040"/>
        <dbReference type="ChEBI" id="CHEBI:29036"/>
        <dbReference type="ChEBI" id="CHEBI:30212"/>
        <dbReference type="ChEBI" id="CHEBI:33737"/>
        <dbReference type="ChEBI" id="CHEBI:33738"/>
        <dbReference type="ChEBI" id="CHEBI:49552"/>
        <dbReference type="EC" id="1.97.1.12"/>
    </reaction>
</comment>
<comment type="cofactor">
    <text evidence="1">PSI electron transfer chain: 5 chlorophyll a, 1 chlorophyll a', 2 phylloquinones and 3 4Fe-4S clusters. PSI core antenna: 90 chlorophyll a, 22 carotenoids, 3 phospholipids and 1 galactolipid. P700 is a chlorophyll a/chlorophyll a' dimer, A0 is one or more chlorophyll a, A1 is one or both phylloquinones and FX is a shared 4Fe-4S iron-sulfur center.</text>
</comment>
<comment type="subunit">
    <text evidence="1">The PsaA/B heterodimer binds the P700 chlorophyll special pair and subsequent electron acceptors. PSI consists of a core antenna complex that captures photons, and an electron transfer chain that converts photonic excitation into a charge separation. The cyanobacterial PSI reaction center is composed of one copy each of PsaA,B,C,D,E,F,I,J,K,L,M and X, and forms trimeric complexes.</text>
</comment>
<comment type="subcellular location">
    <subcellularLocation>
        <location>Cellular thylakoid membrane</location>
        <topology>Multi-pass membrane protein</topology>
    </subcellularLocation>
</comment>
<comment type="similarity">
    <text evidence="1">Belongs to the PsaA/PsaB family.</text>
</comment>
<sequence length="751" mass="82950">MTISPPEREAKAKVSVDNNPVPTSFEKWGKPGHFDRTLARGPKTTTWIWNLHANAHDFDSQTSDLEDVSRKIFSAHFGHLAVVFVWLSGMYFHGAKFSNYEGWLADPTHIKPSAQVVWPIVGQGILNGDVGGGFHGIQITSGLFYLWRASGFTDSYQLYCTAIGGLVMAALMLFAGWFHYHVKAPKLEWFQNVESMMNHHLAGLLGLGSLGWAGHQIHVSMPINKLLDAGVAPKDIPLPHEFILEPSKMAELYPSFAQGLTPFFTLNWGVYSDFLTFKGGLNPVTGGLWLSDTAHHHLAIAVLFIIAGHMYRTNWGIGHSMKEILEAHKGPFTGEGHKGLYEILTTSWHAQLAINLALLGSLTIIVAQHMYAMPPYPYQAIDYATQLSLFTHHMWIGGFLIVGAGAHGAIFMVRDYDPAKNVNNLLDRMLRHRDAIISHLNWVCIFLGFHSFGLYIHNDTMRALGRPQDMFSDTAIQLQPIFAQWVQHLHTLAPGATAPNALATASYAFGGETIAVAGKVAMMPITLGTADFMVHHIHAFTIHVTALILLKGVLYARSSRLVPDKANLGFRFPCDGPGRGGTCQVSGWDHVFLGLFWMYNSLSIVIFHFSWKMQSDVWGTVSPDGSVTHVTLGNFAQSAITINGWLRDFLWAQAANVINSYGSALSAYGIMFLAGHFVFAFSLMFLFSGRGYWQELIESIVWAHNKLNVAPAIQPRALSIIQGRAVGVAHYLLGGIVTTWAFFLARSLSIG</sequence>
<gene>
    <name evidence="1" type="primary">psaA</name>
    <name type="ordered locus">slr1834</name>
</gene>
<feature type="chain" id="PRO_0000088598" description="Photosystem I P700 chlorophyll a apoprotein A1">
    <location>
        <begin position="1"/>
        <end position="751"/>
    </location>
</feature>
<feature type="transmembrane region" description="Helical; Name=I" evidence="1">
    <location>
        <begin position="72"/>
        <end position="95"/>
    </location>
</feature>
<feature type="transmembrane region" description="Helical; Name=II" evidence="1">
    <location>
        <begin position="158"/>
        <end position="181"/>
    </location>
</feature>
<feature type="transmembrane region" description="Helical; Name=III" evidence="1">
    <location>
        <begin position="197"/>
        <end position="221"/>
    </location>
</feature>
<feature type="transmembrane region" description="Helical; Name=IV" evidence="1">
    <location>
        <begin position="293"/>
        <end position="311"/>
    </location>
</feature>
<feature type="transmembrane region" description="Helical; Name=V" evidence="1">
    <location>
        <begin position="348"/>
        <end position="371"/>
    </location>
</feature>
<feature type="transmembrane region" description="Helical; Name=VI" evidence="1">
    <location>
        <begin position="387"/>
        <end position="413"/>
    </location>
</feature>
<feature type="transmembrane region" description="Helical; Name=VII" evidence="1">
    <location>
        <begin position="435"/>
        <end position="457"/>
    </location>
</feature>
<feature type="transmembrane region" description="Helical; Name=VIII" evidence="1">
    <location>
        <begin position="532"/>
        <end position="550"/>
    </location>
</feature>
<feature type="transmembrane region" description="Helical; Name=IX" evidence="1">
    <location>
        <begin position="590"/>
        <end position="611"/>
    </location>
</feature>
<feature type="transmembrane region" description="Helical; Name=X" evidence="1">
    <location>
        <begin position="665"/>
        <end position="687"/>
    </location>
</feature>
<feature type="transmembrane region" description="Helical; Name=XI" evidence="1">
    <location>
        <begin position="725"/>
        <end position="745"/>
    </location>
</feature>
<feature type="binding site" evidence="1">
    <location>
        <position position="574"/>
    </location>
    <ligand>
        <name>[4Fe-4S] cluster</name>
        <dbReference type="ChEBI" id="CHEBI:49883"/>
        <note>ligand shared between dimeric partners</note>
    </ligand>
</feature>
<feature type="binding site" evidence="1">
    <location>
        <position position="583"/>
    </location>
    <ligand>
        <name>[4Fe-4S] cluster</name>
        <dbReference type="ChEBI" id="CHEBI:49883"/>
        <note>ligand shared between dimeric partners</note>
    </ligand>
</feature>
<feature type="binding site" description="axial binding residue" evidence="1">
    <location>
        <position position="676"/>
    </location>
    <ligand>
        <name>chlorophyll a'</name>
        <dbReference type="ChEBI" id="CHEBI:189419"/>
        <label>A1</label>
    </ligand>
    <ligandPart>
        <name>Mg</name>
        <dbReference type="ChEBI" id="CHEBI:25107"/>
    </ligandPart>
</feature>
<feature type="binding site" description="axial binding residue" evidence="1">
    <location>
        <position position="684"/>
    </location>
    <ligand>
        <name>chlorophyll a</name>
        <dbReference type="ChEBI" id="CHEBI:58416"/>
        <label>A3</label>
    </ligand>
    <ligandPart>
        <name>Mg</name>
        <dbReference type="ChEBI" id="CHEBI:25107"/>
    </ligandPart>
</feature>
<feature type="binding site" evidence="1">
    <location>
        <position position="692"/>
    </location>
    <ligand>
        <name>chlorophyll a</name>
        <dbReference type="ChEBI" id="CHEBI:58416"/>
        <label>A3</label>
    </ligand>
</feature>
<feature type="binding site" evidence="1">
    <location>
        <position position="693"/>
    </location>
    <ligand>
        <name>phylloquinone</name>
        <dbReference type="ChEBI" id="CHEBI:18067"/>
        <label>A</label>
    </ligand>
</feature>
<feature type="sequence conflict" description="In Ref. 2; BAA17437." evidence="2" ref="2">
    <original>I</original>
    <variation>V</variation>
    <location>
        <position position="604"/>
    </location>
</feature>
<feature type="strand" evidence="3">
    <location>
        <begin position="16"/>
        <end position="18"/>
    </location>
</feature>
<feature type="turn" evidence="3">
    <location>
        <begin position="25"/>
        <end position="29"/>
    </location>
</feature>
<feature type="turn" evidence="3">
    <location>
        <begin position="31"/>
        <end position="34"/>
    </location>
</feature>
<feature type="turn" evidence="3">
    <location>
        <begin position="36"/>
        <end position="38"/>
    </location>
</feature>
<feature type="helix" evidence="3">
    <location>
        <begin position="46"/>
        <end position="53"/>
    </location>
</feature>
<feature type="helix" evidence="3">
    <location>
        <begin position="58"/>
        <end position="61"/>
    </location>
</feature>
<feature type="helix" evidence="3">
    <location>
        <begin position="65"/>
        <end position="96"/>
    </location>
</feature>
<feature type="helix" evidence="3">
    <location>
        <begin position="100"/>
        <end position="105"/>
    </location>
</feature>
<feature type="turn" evidence="3">
    <location>
        <begin position="107"/>
        <end position="109"/>
    </location>
</feature>
<feature type="strand" evidence="6">
    <location>
        <begin position="113"/>
        <end position="115"/>
    </location>
</feature>
<feature type="strand" evidence="6">
    <location>
        <begin position="120"/>
        <end position="122"/>
    </location>
</feature>
<feature type="helix" evidence="3">
    <location>
        <begin position="123"/>
        <end position="126"/>
    </location>
</feature>
<feature type="strand" evidence="3">
    <location>
        <begin position="127"/>
        <end position="129"/>
    </location>
</feature>
<feature type="strand" evidence="3">
    <location>
        <begin position="131"/>
        <end position="133"/>
    </location>
</feature>
<feature type="strand" evidence="3">
    <location>
        <begin position="135"/>
        <end position="138"/>
    </location>
</feature>
<feature type="helix" evidence="3">
    <location>
        <begin position="143"/>
        <end position="150"/>
    </location>
</feature>
<feature type="helix" evidence="3">
    <location>
        <begin position="155"/>
        <end position="181"/>
    </location>
</feature>
<feature type="strand" evidence="3">
    <location>
        <begin position="183"/>
        <end position="185"/>
    </location>
</feature>
<feature type="helix" evidence="3">
    <location>
        <begin position="187"/>
        <end position="190"/>
    </location>
</feature>
<feature type="helix" evidence="3">
    <location>
        <begin position="193"/>
        <end position="202"/>
    </location>
</feature>
<feature type="helix" evidence="3">
    <location>
        <begin position="205"/>
        <end position="218"/>
    </location>
</feature>
<feature type="helix" evidence="3">
    <location>
        <begin position="220"/>
        <end position="227"/>
    </location>
</feature>
<feature type="turn" evidence="3">
    <location>
        <begin position="228"/>
        <end position="230"/>
    </location>
</feature>
<feature type="turn" evidence="6">
    <location>
        <begin position="233"/>
        <end position="235"/>
    </location>
</feature>
<feature type="helix" evidence="3">
    <location>
        <begin position="240"/>
        <end position="242"/>
    </location>
</feature>
<feature type="helix" evidence="3">
    <location>
        <begin position="246"/>
        <end position="252"/>
    </location>
</feature>
<feature type="helix" evidence="3">
    <location>
        <begin position="254"/>
        <end position="257"/>
    </location>
</feature>
<feature type="helix" evidence="3">
    <location>
        <begin position="263"/>
        <end position="265"/>
    </location>
</feature>
<feature type="helix" evidence="3">
    <location>
        <begin position="268"/>
        <end position="273"/>
    </location>
</feature>
<feature type="turn" evidence="3">
    <location>
        <begin position="283"/>
        <end position="285"/>
    </location>
</feature>
<feature type="strand" evidence="3">
    <location>
        <begin position="286"/>
        <end position="288"/>
    </location>
</feature>
<feature type="helix" evidence="3">
    <location>
        <begin position="290"/>
        <end position="307"/>
    </location>
</feature>
<feature type="strand" evidence="3">
    <location>
        <begin position="314"/>
        <end position="316"/>
    </location>
</feature>
<feature type="helix" evidence="3">
    <location>
        <begin position="321"/>
        <end position="326"/>
    </location>
</feature>
<feature type="strand" evidence="3">
    <location>
        <begin position="331"/>
        <end position="333"/>
    </location>
</feature>
<feature type="turn" evidence="3">
    <location>
        <begin position="334"/>
        <end position="339"/>
    </location>
</feature>
<feature type="helix" evidence="3">
    <location>
        <begin position="340"/>
        <end position="343"/>
    </location>
</feature>
<feature type="turn" evidence="3">
    <location>
        <begin position="344"/>
        <end position="346"/>
    </location>
</feature>
<feature type="helix" evidence="3">
    <location>
        <begin position="348"/>
        <end position="372"/>
    </location>
</feature>
<feature type="turn" evidence="3">
    <location>
        <begin position="377"/>
        <end position="381"/>
    </location>
</feature>
<feature type="helix" evidence="3">
    <location>
        <begin position="383"/>
        <end position="414"/>
    </location>
</feature>
<feature type="helix" evidence="3">
    <location>
        <begin position="418"/>
        <end position="420"/>
    </location>
</feature>
<feature type="strand" evidence="3">
    <location>
        <begin position="422"/>
        <end position="424"/>
    </location>
</feature>
<feature type="helix" evidence="3">
    <location>
        <begin position="425"/>
        <end position="430"/>
    </location>
</feature>
<feature type="helix" evidence="3">
    <location>
        <begin position="433"/>
        <end position="463"/>
    </location>
</feature>
<feature type="helix" evidence="3">
    <location>
        <begin position="467"/>
        <end position="469"/>
    </location>
</feature>
<feature type="strand" evidence="3">
    <location>
        <begin position="470"/>
        <end position="472"/>
    </location>
</feature>
<feature type="helix" evidence="3">
    <location>
        <begin position="481"/>
        <end position="491"/>
    </location>
</feature>
<feature type="turn" evidence="3">
    <location>
        <begin position="495"/>
        <end position="497"/>
    </location>
</feature>
<feature type="helix" evidence="3">
    <location>
        <begin position="507"/>
        <end position="509"/>
    </location>
</feature>
<feature type="strand" evidence="3">
    <location>
        <begin position="514"/>
        <end position="516"/>
    </location>
</feature>
<feature type="strand" evidence="3">
    <location>
        <begin position="519"/>
        <end position="522"/>
    </location>
</feature>
<feature type="helix" evidence="3">
    <location>
        <begin position="529"/>
        <end position="554"/>
    </location>
</feature>
<feature type="helix" evidence="3">
    <location>
        <begin position="565"/>
        <end position="568"/>
    </location>
</feature>
<feature type="strand" evidence="6">
    <location>
        <begin position="573"/>
        <end position="575"/>
    </location>
</feature>
<feature type="helix" evidence="4">
    <location>
        <begin position="578"/>
        <end position="580"/>
    </location>
</feature>
<feature type="helix" evidence="3">
    <location>
        <begin position="587"/>
        <end position="616"/>
    </location>
</feature>
<feature type="strand" evidence="3">
    <location>
        <begin position="619"/>
        <end position="621"/>
    </location>
</feature>
<feature type="strand" evidence="6">
    <location>
        <begin position="623"/>
        <end position="625"/>
    </location>
</feature>
<feature type="strand" evidence="3">
    <location>
        <begin position="627"/>
        <end position="631"/>
    </location>
</feature>
<feature type="helix" evidence="3">
    <location>
        <begin position="635"/>
        <end position="638"/>
    </location>
</feature>
<feature type="helix" evidence="3">
    <location>
        <begin position="642"/>
        <end position="648"/>
    </location>
</feature>
<feature type="helix" evidence="3">
    <location>
        <begin position="650"/>
        <end position="653"/>
    </location>
</feature>
<feature type="helix" evidence="3">
    <location>
        <begin position="655"/>
        <end position="658"/>
    </location>
</feature>
<feature type="turn" evidence="5">
    <location>
        <begin position="659"/>
        <end position="662"/>
    </location>
</feature>
<feature type="helix" evidence="3">
    <location>
        <begin position="666"/>
        <end position="687"/>
    </location>
</feature>
<feature type="helix" evidence="3">
    <location>
        <begin position="690"/>
        <end position="706"/>
    </location>
</feature>
<feature type="strand" evidence="3">
    <location>
        <begin position="712"/>
        <end position="714"/>
    </location>
</feature>
<feature type="helix" evidence="3">
    <location>
        <begin position="720"/>
        <end position="750"/>
    </location>
</feature>
<keyword id="KW-0002">3D-structure</keyword>
<keyword id="KW-0004">4Fe-4S</keyword>
<keyword id="KW-0148">Chlorophyll</keyword>
<keyword id="KW-0157">Chromophore</keyword>
<keyword id="KW-0903">Direct protein sequencing</keyword>
<keyword id="KW-0249">Electron transport</keyword>
<keyword id="KW-0408">Iron</keyword>
<keyword id="KW-0411">Iron-sulfur</keyword>
<keyword id="KW-0460">Magnesium</keyword>
<keyword id="KW-0472">Membrane</keyword>
<keyword id="KW-0479">Metal-binding</keyword>
<keyword id="KW-0560">Oxidoreductase</keyword>
<keyword id="KW-0602">Photosynthesis</keyword>
<keyword id="KW-0603">Photosystem I</keyword>
<keyword id="KW-1185">Reference proteome</keyword>
<keyword id="KW-0793">Thylakoid</keyword>
<keyword id="KW-0812">Transmembrane</keyword>
<keyword id="KW-1133">Transmembrane helix</keyword>
<keyword id="KW-0813">Transport</keyword>
<protein>
    <recommendedName>
        <fullName evidence="1">Photosystem I P700 chlorophyll a apoprotein A1</fullName>
        <ecNumber evidence="1">1.97.1.12</ecNumber>
    </recommendedName>
    <alternativeName>
        <fullName evidence="1">PsaA</fullName>
    </alternativeName>
</protein>
<reference key="1">
    <citation type="journal article" date="1991" name="Plant Mol. Biol.">
        <title>Expression of photosynthesis genes in the cyanobacterium Synechocystis sp. PCC 6803: psaA-psaB and psbA transcripts accumulate in dark-grown cells.</title>
        <authorList>
            <person name="Smart L.B."/>
            <person name="McIntosh L."/>
        </authorList>
    </citation>
    <scope>NUCLEOTIDE SEQUENCE [GENOMIC DNA]</scope>
</reference>
<reference key="2">
    <citation type="journal article" date="1996" name="DNA Res.">
        <title>Sequence analysis of the genome of the unicellular cyanobacterium Synechocystis sp. strain PCC6803. II. Sequence determination of the entire genome and assignment of potential protein-coding regions.</title>
        <authorList>
            <person name="Kaneko T."/>
            <person name="Sato S."/>
            <person name="Kotani H."/>
            <person name="Tanaka A."/>
            <person name="Asamizu E."/>
            <person name="Nakamura Y."/>
            <person name="Miyajima N."/>
            <person name="Hirosawa M."/>
            <person name="Sugiura M."/>
            <person name="Sasamoto S."/>
            <person name="Kimura T."/>
            <person name="Hosouchi T."/>
            <person name="Matsuno A."/>
            <person name="Muraki A."/>
            <person name="Nakazaki N."/>
            <person name="Naruo K."/>
            <person name="Okumura S."/>
            <person name="Shimpo S."/>
            <person name="Takeuchi C."/>
            <person name="Wada T."/>
            <person name="Watanabe A."/>
            <person name="Yamada M."/>
            <person name="Yasuda M."/>
            <person name="Tabata S."/>
        </authorList>
    </citation>
    <scope>NUCLEOTIDE SEQUENCE [LARGE SCALE GENOMIC DNA]</scope>
    <source>
        <strain>ATCC 27184 / PCC 6803 / Kazusa</strain>
    </source>
</reference>
<reference key="3">
    <citation type="journal article" date="1997" name="J. Biol. Chem.">
        <title>Topography of the photosystem I core proteins of the cyanobacterium Synechocystis sp. PCC 6803.</title>
        <authorList>
            <person name="Sun J."/>
            <person name="Xu Q."/>
            <person name="Chitnis V.P."/>
            <person name="Jin P."/>
            <person name="Chitnis P.R."/>
        </authorList>
    </citation>
    <scope>PROTEIN SEQUENCE OF 28-32</scope>
    <scope>TOPOLOGY</scope>
</reference>
<reference key="4">
    <citation type="journal article" date="2003" name="Eur. J. Biochem.">
        <title>Reversed-phase HPLC determination of chlorophyll a' and phylloquinone in photosystem I of oxygenic photosynthetic organisms.</title>
        <authorList>
            <person name="Nakamura A."/>
            <person name="Akai M."/>
            <person name="Yoshida E."/>
            <person name="Taki T."/>
            <person name="Watanabe T."/>
        </authorList>
    </citation>
    <scope>PRESENCE OF CHLOROPHYLL A' IN PSI</scope>
</reference>